<organism>
    <name type="scientific">Mus musculus</name>
    <name type="common">Mouse</name>
    <dbReference type="NCBI Taxonomy" id="10090"/>
    <lineage>
        <taxon>Eukaryota</taxon>
        <taxon>Metazoa</taxon>
        <taxon>Chordata</taxon>
        <taxon>Craniata</taxon>
        <taxon>Vertebrata</taxon>
        <taxon>Euteleostomi</taxon>
        <taxon>Mammalia</taxon>
        <taxon>Eutheria</taxon>
        <taxon>Euarchontoglires</taxon>
        <taxon>Glires</taxon>
        <taxon>Rodentia</taxon>
        <taxon>Myomorpha</taxon>
        <taxon>Muroidea</taxon>
        <taxon>Muridae</taxon>
        <taxon>Murinae</taxon>
        <taxon>Mus</taxon>
        <taxon>Mus</taxon>
    </lineage>
</organism>
<sequence length="251" mass="28287">MTDSATTNGDDRDPEIELFVKAGIDGESIGNCPFSQRLFMILWLKGVVFNVTTVDLKRKPADLHNLAPGTHPPFLTFNGDVKTDVNKIEEFLEETLTPEKYPKLAAKHRESNTAGIDIFSKFSAYIKNTKQQNNAALERGLTKALRKLDDYLNSPLPEEIDTNTHGDEKGSQRKFLDGDELTLADCNLLPKLHVVKIVAKKYRNYDIPAEMTGLWRYLKNAYARDEFTNTCAADSEIELAYADVARRLSRS</sequence>
<protein>
    <recommendedName>
        <fullName>Chloride intracellular channel protein 5</fullName>
    </recommendedName>
    <alternativeName>
        <fullName evidence="2">Glutaredoxin-like oxidoreductase CLIC5</fullName>
        <ecNumber evidence="2">1.8.-.-</ecNumber>
    </alternativeName>
</protein>
<keyword id="KW-1003">Cell membrane</keyword>
<keyword id="KW-0966">Cell projection</keyword>
<keyword id="KW-0868">Chloride</keyword>
<keyword id="KW-0869">Chloride channel</keyword>
<keyword id="KW-0963">Cytoplasm</keyword>
<keyword id="KW-0206">Cytoskeleton</keyword>
<keyword id="KW-0333">Golgi apparatus</keyword>
<keyword id="KW-1009">Hearing</keyword>
<keyword id="KW-0407">Ion channel</keyword>
<keyword id="KW-0406">Ion transport</keyword>
<keyword id="KW-0472">Membrane</keyword>
<keyword id="KW-0496">Mitochondrion</keyword>
<keyword id="KW-0560">Oxidoreductase</keyword>
<keyword id="KW-1185">Reference proteome</keyword>
<keyword id="KW-0716">Sensory transduction</keyword>
<keyword id="KW-0812">Transmembrane</keyword>
<keyword id="KW-1133">Transmembrane helix</keyword>
<keyword id="KW-0813">Transport</keyword>
<keyword id="KW-0844">Vision</keyword>
<keyword id="KW-0851">Voltage-gated channel</keyword>
<reference key="1">
    <citation type="journal article" date="2005" name="Science">
        <title>The transcriptional landscape of the mammalian genome.</title>
        <authorList>
            <person name="Carninci P."/>
            <person name="Kasukawa T."/>
            <person name="Katayama S."/>
            <person name="Gough J."/>
            <person name="Frith M.C."/>
            <person name="Maeda N."/>
            <person name="Oyama R."/>
            <person name="Ravasi T."/>
            <person name="Lenhard B."/>
            <person name="Wells C."/>
            <person name="Kodzius R."/>
            <person name="Shimokawa K."/>
            <person name="Bajic V.B."/>
            <person name="Brenner S.E."/>
            <person name="Batalov S."/>
            <person name="Forrest A.R."/>
            <person name="Zavolan M."/>
            <person name="Davis M.J."/>
            <person name="Wilming L.G."/>
            <person name="Aidinis V."/>
            <person name="Allen J.E."/>
            <person name="Ambesi-Impiombato A."/>
            <person name="Apweiler R."/>
            <person name="Aturaliya R.N."/>
            <person name="Bailey T.L."/>
            <person name="Bansal M."/>
            <person name="Baxter L."/>
            <person name="Beisel K.W."/>
            <person name="Bersano T."/>
            <person name="Bono H."/>
            <person name="Chalk A.M."/>
            <person name="Chiu K.P."/>
            <person name="Choudhary V."/>
            <person name="Christoffels A."/>
            <person name="Clutterbuck D.R."/>
            <person name="Crowe M.L."/>
            <person name="Dalla E."/>
            <person name="Dalrymple B.P."/>
            <person name="de Bono B."/>
            <person name="Della Gatta G."/>
            <person name="di Bernardo D."/>
            <person name="Down T."/>
            <person name="Engstrom P."/>
            <person name="Fagiolini M."/>
            <person name="Faulkner G."/>
            <person name="Fletcher C.F."/>
            <person name="Fukushima T."/>
            <person name="Furuno M."/>
            <person name="Futaki S."/>
            <person name="Gariboldi M."/>
            <person name="Georgii-Hemming P."/>
            <person name="Gingeras T.R."/>
            <person name="Gojobori T."/>
            <person name="Green R.E."/>
            <person name="Gustincich S."/>
            <person name="Harbers M."/>
            <person name="Hayashi Y."/>
            <person name="Hensch T.K."/>
            <person name="Hirokawa N."/>
            <person name="Hill D."/>
            <person name="Huminiecki L."/>
            <person name="Iacono M."/>
            <person name="Ikeo K."/>
            <person name="Iwama A."/>
            <person name="Ishikawa T."/>
            <person name="Jakt M."/>
            <person name="Kanapin A."/>
            <person name="Katoh M."/>
            <person name="Kawasawa Y."/>
            <person name="Kelso J."/>
            <person name="Kitamura H."/>
            <person name="Kitano H."/>
            <person name="Kollias G."/>
            <person name="Krishnan S.P."/>
            <person name="Kruger A."/>
            <person name="Kummerfeld S.K."/>
            <person name="Kurochkin I.V."/>
            <person name="Lareau L.F."/>
            <person name="Lazarevic D."/>
            <person name="Lipovich L."/>
            <person name="Liu J."/>
            <person name="Liuni S."/>
            <person name="McWilliam S."/>
            <person name="Madan Babu M."/>
            <person name="Madera M."/>
            <person name="Marchionni L."/>
            <person name="Matsuda H."/>
            <person name="Matsuzawa S."/>
            <person name="Miki H."/>
            <person name="Mignone F."/>
            <person name="Miyake S."/>
            <person name="Morris K."/>
            <person name="Mottagui-Tabar S."/>
            <person name="Mulder N."/>
            <person name="Nakano N."/>
            <person name="Nakauchi H."/>
            <person name="Ng P."/>
            <person name="Nilsson R."/>
            <person name="Nishiguchi S."/>
            <person name="Nishikawa S."/>
            <person name="Nori F."/>
            <person name="Ohara O."/>
            <person name="Okazaki Y."/>
            <person name="Orlando V."/>
            <person name="Pang K.C."/>
            <person name="Pavan W.J."/>
            <person name="Pavesi G."/>
            <person name="Pesole G."/>
            <person name="Petrovsky N."/>
            <person name="Piazza S."/>
            <person name="Reed J."/>
            <person name="Reid J.F."/>
            <person name="Ring B.Z."/>
            <person name="Ringwald M."/>
            <person name="Rost B."/>
            <person name="Ruan Y."/>
            <person name="Salzberg S.L."/>
            <person name="Sandelin A."/>
            <person name="Schneider C."/>
            <person name="Schoenbach C."/>
            <person name="Sekiguchi K."/>
            <person name="Semple C.A."/>
            <person name="Seno S."/>
            <person name="Sessa L."/>
            <person name="Sheng Y."/>
            <person name="Shibata Y."/>
            <person name="Shimada H."/>
            <person name="Shimada K."/>
            <person name="Silva D."/>
            <person name="Sinclair B."/>
            <person name="Sperling S."/>
            <person name="Stupka E."/>
            <person name="Sugiura K."/>
            <person name="Sultana R."/>
            <person name="Takenaka Y."/>
            <person name="Taki K."/>
            <person name="Tammoja K."/>
            <person name="Tan S.L."/>
            <person name="Tang S."/>
            <person name="Taylor M.S."/>
            <person name="Tegner J."/>
            <person name="Teichmann S.A."/>
            <person name="Ueda H.R."/>
            <person name="van Nimwegen E."/>
            <person name="Verardo R."/>
            <person name="Wei C.L."/>
            <person name="Yagi K."/>
            <person name="Yamanishi H."/>
            <person name="Zabarovsky E."/>
            <person name="Zhu S."/>
            <person name="Zimmer A."/>
            <person name="Hide W."/>
            <person name="Bult C."/>
            <person name="Grimmond S.M."/>
            <person name="Teasdale R.D."/>
            <person name="Liu E.T."/>
            <person name="Brusic V."/>
            <person name="Quackenbush J."/>
            <person name="Wahlestedt C."/>
            <person name="Mattick J.S."/>
            <person name="Hume D.A."/>
            <person name="Kai C."/>
            <person name="Sasaki D."/>
            <person name="Tomaru Y."/>
            <person name="Fukuda S."/>
            <person name="Kanamori-Katayama M."/>
            <person name="Suzuki M."/>
            <person name="Aoki J."/>
            <person name="Arakawa T."/>
            <person name="Iida J."/>
            <person name="Imamura K."/>
            <person name="Itoh M."/>
            <person name="Kato T."/>
            <person name="Kawaji H."/>
            <person name="Kawagashira N."/>
            <person name="Kawashima T."/>
            <person name="Kojima M."/>
            <person name="Kondo S."/>
            <person name="Konno H."/>
            <person name="Nakano K."/>
            <person name="Ninomiya N."/>
            <person name="Nishio T."/>
            <person name="Okada M."/>
            <person name="Plessy C."/>
            <person name="Shibata K."/>
            <person name="Shiraki T."/>
            <person name="Suzuki S."/>
            <person name="Tagami M."/>
            <person name="Waki K."/>
            <person name="Watahiki A."/>
            <person name="Okamura-Oho Y."/>
            <person name="Suzuki H."/>
            <person name="Kawai J."/>
            <person name="Hayashizaki Y."/>
        </authorList>
    </citation>
    <scope>NUCLEOTIDE SEQUENCE [LARGE SCALE MRNA]</scope>
    <source>
        <strain>C57BL/6J</strain>
        <strain>NOD</strain>
        <tissue>Adrenal gland</tissue>
        <tissue>Spleen</tissue>
    </source>
</reference>
<reference key="2">
    <citation type="journal article" date="2004" name="Genome Res.">
        <title>The status, quality, and expansion of the NIH full-length cDNA project: the Mammalian Gene Collection (MGC).</title>
        <authorList>
            <consortium name="The MGC Project Team"/>
        </authorList>
    </citation>
    <scope>NUCLEOTIDE SEQUENCE [LARGE SCALE MRNA]</scope>
    <source>
        <strain>C57BL/6J</strain>
        <tissue>Thymus</tissue>
    </source>
</reference>
<reference key="3">
    <citation type="journal article" date="2006" name="J. Neurosci.">
        <title>The chloride intracellular channel protein CLIC5 is expressed at high levels in hair cell stereocilia and is essential for normal inner ear function.</title>
        <authorList>
            <person name="Gagnon L.H."/>
            <person name="Longo-Guess C.M."/>
            <person name="Berryman M."/>
            <person name="Shin J.-B."/>
            <person name="Saylor K.W."/>
            <person name="Yu H."/>
            <person name="Gillespie P.G."/>
            <person name="Johnson K.R."/>
        </authorList>
    </citation>
    <scope>FUNCTION</scope>
    <scope>SUBCELLULAR LOCATION</scope>
    <scope>TISSUE SPECIFICITY</scope>
    <scope>DISEASE</scope>
</reference>
<reference key="4">
    <citation type="journal article" date="2010" name="Cell">
        <title>A tissue-specific atlas of mouse protein phosphorylation and expression.</title>
        <authorList>
            <person name="Huttlin E.L."/>
            <person name="Jedrychowski M.P."/>
            <person name="Elias J.E."/>
            <person name="Goswami T."/>
            <person name="Rad R."/>
            <person name="Beausoleil S.A."/>
            <person name="Villen J."/>
            <person name="Haas W."/>
            <person name="Sowa M.E."/>
            <person name="Gygi S.P."/>
        </authorList>
    </citation>
    <scope>IDENTIFICATION BY MASS SPECTROMETRY [LARGE SCALE ANALYSIS]</scope>
    <source>
        <tissue>Brown adipose tissue</tissue>
        <tissue>Heart</tissue>
        <tissue>Kidney</tissue>
        <tissue>Lung</tissue>
        <tissue>Spleen</tissue>
    </source>
</reference>
<reference key="5">
    <citation type="journal article" date="2014" name="Cytoskeleton">
        <title>CLIC5 stabilizes membrane-actin filament linkages at the base of hair cell stereocilia in a molecular complex with radixin, taperin, and myosin VI.</title>
        <authorList>
            <person name="Salles F.T."/>
            <person name="Andrade L.R."/>
            <person name="Tanda S."/>
            <person name="Grati M."/>
            <person name="Plona K.L."/>
            <person name="Gagnon L.H."/>
            <person name="Johnson K.R."/>
            <person name="Kachar B."/>
            <person name="Berryman M.A."/>
        </authorList>
    </citation>
    <scope>FUNCTION</scope>
    <scope>INTERACTION WITH EZR; MYO6 AND RDX</scope>
    <scope>SUBCELLULAR LOCATION</scope>
    <scope>TISSUE SPECIFICITY</scope>
    <scope>DISEASE</scope>
</reference>
<reference key="6">
    <citation type="journal article" date="2018" name="Exp. Eye Res.">
        <title>The klotho-related protein KLPH (lctl) has preferred expression in lens and is essential for expression of clic5 and normal lens suture formation.</title>
        <authorList>
            <person name="Fan J."/>
            <person name="Lerner J."/>
            <person name="Wyatt M.K."/>
            <person name="Cai P."/>
            <person name="Peterson K."/>
            <person name="Dong L."/>
            <person name="Wistow G."/>
        </authorList>
    </citation>
    <scope>FUNCTION</scope>
    <scope>SUBCELLULAR LOCATION</scope>
    <scope>TISSUE SPECIFICITY</scope>
    <scope>DISEASE</scope>
</reference>
<reference key="7">
    <citation type="journal article" date="2024" name="Mol. Ther.">
        <title>Critical role of TPRN rings in the stereocilia for hearing.</title>
        <authorList>
            <person name="Qi J."/>
            <person name="Tan F."/>
            <person name="Zhang L."/>
            <person name="Zhou Y."/>
            <person name="Zhang Z."/>
            <person name="Sun Q."/>
            <person name="Li N."/>
            <person name="Fang Y."/>
            <person name="Chen X."/>
            <person name="Wu Y."/>
            <person name="Zhong G."/>
            <person name="Chai R."/>
        </authorList>
    </citation>
    <scope>INTERACTION WITH TPRN</scope>
    <scope>SUBCELLULAR LOCATION</scope>
</reference>
<dbReference type="EC" id="1.8.-.-" evidence="2"/>
<dbReference type="EMBL" id="AK046522">
    <property type="protein sequence ID" value="BAC32769.1"/>
    <property type="molecule type" value="mRNA"/>
</dbReference>
<dbReference type="EMBL" id="AK156849">
    <property type="protein sequence ID" value="BAE33875.1"/>
    <property type="molecule type" value="mRNA"/>
</dbReference>
<dbReference type="EMBL" id="BC064037">
    <property type="protein sequence ID" value="AAH64037.1"/>
    <property type="molecule type" value="mRNA"/>
</dbReference>
<dbReference type="CCDS" id="CCDS28804.1"/>
<dbReference type="RefSeq" id="NP_766209.1">
    <property type="nucleotide sequence ID" value="NM_172621.2"/>
</dbReference>
<dbReference type="SMR" id="Q8BXK9"/>
<dbReference type="FunCoup" id="Q8BXK9">
    <property type="interactions" value="530"/>
</dbReference>
<dbReference type="IntAct" id="Q8BXK9">
    <property type="interactions" value="1"/>
</dbReference>
<dbReference type="STRING" id="10090.ENSMUSP00000024755"/>
<dbReference type="iPTMnet" id="Q8BXK9"/>
<dbReference type="PhosphoSitePlus" id="Q8BXK9"/>
<dbReference type="jPOST" id="Q8BXK9"/>
<dbReference type="PaxDb" id="10090-ENSMUSP00000024755"/>
<dbReference type="PeptideAtlas" id="Q8BXK9"/>
<dbReference type="ProteomicsDB" id="283385"/>
<dbReference type="Antibodypedia" id="16850">
    <property type="antibodies" value="244 antibodies from 27 providers"/>
</dbReference>
<dbReference type="DNASU" id="224796"/>
<dbReference type="Ensembl" id="ENSMUST00000024755.7">
    <property type="protein sequence ID" value="ENSMUSP00000024755.6"/>
    <property type="gene ID" value="ENSMUSG00000023959.11"/>
</dbReference>
<dbReference type="GeneID" id="224796"/>
<dbReference type="KEGG" id="mmu:224796"/>
<dbReference type="UCSC" id="uc008cpw.1">
    <property type="organism name" value="mouse"/>
</dbReference>
<dbReference type="AGR" id="MGI:1917912"/>
<dbReference type="CTD" id="53405"/>
<dbReference type="MGI" id="MGI:1917912">
    <property type="gene designation" value="Clic5"/>
</dbReference>
<dbReference type="VEuPathDB" id="HostDB:ENSMUSG00000023959"/>
<dbReference type="eggNOG" id="KOG1422">
    <property type="taxonomic scope" value="Eukaryota"/>
</dbReference>
<dbReference type="GeneTree" id="ENSGT00940000156406"/>
<dbReference type="HOGENOM" id="CLU_061051_1_0_1"/>
<dbReference type="InParanoid" id="Q8BXK9"/>
<dbReference type="OMA" id="RCENSIE"/>
<dbReference type="OrthoDB" id="1935530at2759"/>
<dbReference type="PhylomeDB" id="Q8BXK9"/>
<dbReference type="TreeFam" id="TF315438"/>
<dbReference type="BioGRID-ORCS" id="224796">
    <property type="hits" value="2 hits in 77 CRISPR screens"/>
</dbReference>
<dbReference type="ChiTaRS" id="Clic5">
    <property type="organism name" value="mouse"/>
</dbReference>
<dbReference type="PRO" id="PR:Q8BXK9"/>
<dbReference type="Proteomes" id="UP000000589">
    <property type="component" value="Chromosome 17"/>
</dbReference>
<dbReference type="RNAct" id="Q8BXK9">
    <property type="molecule type" value="protein"/>
</dbReference>
<dbReference type="Bgee" id="ENSMUSG00000023959">
    <property type="expression patterns" value="Expressed in right lung and 134 other cell types or tissues"/>
</dbReference>
<dbReference type="ExpressionAtlas" id="Q8BXK9">
    <property type="expression patterns" value="baseline and differential"/>
</dbReference>
<dbReference type="GO" id="GO:0015629">
    <property type="term" value="C:actin cytoskeleton"/>
    <property type="evidence" value="ECO:0000250"/>
    <property type="project" value="UniProtKB"/>
</dbReference>
<dbReference type="GO" id="GO:0016324">
    <property type="term" value="C:apical plasma membrane"/>
    <property type="evidence" value="ECO:0007669"/>
    <property type="project" value="UniProtKB-SubCell"/>
</dbReference>
<dbReference type="GO" id="GO:0005938">
    <property type="term" value="C:cell cortex"/>
    <property type="evidence" value="ECO:0007669"/>
    <property type="project" value="UniProtKB-SubCell"/>
</dbReference>
<dbReference type="GO" id="GO:0005813">
    <property type="term" value="C:centrosome"/>
    <property type="evidence" value="ECO:0007669"/>
    <property type="project" value="UniProtKB-SubCell"/>
</dbReference>
<dbReference type="GO" id="GO:0034707">
    <property type="term" value="C:chloride channel complex"/>
    <property type="evidence" value="ECO:0007669"/>
    <property type="project" value="UniProtKB-KW"/>
</dbReference>
<dbReference type="GO" id="GO:0005794">
    <property type="term" value="C:Golgi apparatus"/>
    <property type="evidence" value="ECO:0007669"/>
    <property type="project" value="UniProtKB-SubCell"/>
</dbReference>
<dbReference type="GO" id="GO:0005739">
    <property type="term" value="C:mitochondrion"/>
    <property type="evidence" value="ECO:0007669"/>
    <property type="project" value="UniProtKB-SubCell"/>
</dbReference>
<dbReference type="GO" id="GO:0005886">
    <property type="term" value="C:plasma membrane"/>
    <property type="evidence" value="ECO:0000304"/>
    <property type="project" value="Reactome"/>
</dbReference>
<dbReference type="GO" id="GO:0032420">
    <property type="term" value="C:stereocilium"/>
    <property type="evidence" value="ECO:0000314"/>
    <property type="project" value="MGI"/>
</dbReference>
<dbReference type="GO" id="GO:0120044">
    <property type="term" value="C:stereocilium base"/>
    <property type="evidence" value="ECO:0000314"/>
    <property type="project" value="UniProtKB"/>
</dbReference>
<dbReference type="GO" id="GO:0032421">
    <property type="term" value="C:stereocilium bundle"/>
    <property type="evidence" value="ECO:0000266"/>
    <property type="project" value="MGI"/>
</dbReference>
<dbReference type="GO" id="GO:0005254">
    <property type="term" value="F:chloride channel activity"/>
    <property type="evidence" value="ECO:0007669"/>
    <property type="project" value="UniProtKB-KW"/>
</dbReference>
<dbReference type="GO" id="GO:0016491">
    <property type="term" value="F:oxidoreductase activity"/>
    <property type="evidence" value="ECO:0007669"/>
    <property type="project" value="UniProtKB-KW"/>
</dbReference>
<dbReference type="GO" id="GO:0060088">
    <property type="term" value="P:auditory receptor cell stereocilium organization"/>
    <property type="evidence" value="ECO:0000315"/>
    <property type="project" value="MGI"/>
</dbReference>
<dbReference type="GO" id="GO:0002024">
    <property type="term" value="P:diet induced thermogenesis"/>
    <property type="evidence" value="ECO:0000315"/>
    <property type="project" value="MGI"/>
</dbReference>
<dbReference type="GO" id="GO:0060122">
    <property type="term" value="P:inner ear receptor cell stereocilium organization"/>
    <property type="evidence" value="ECO:0000315"/>
    <property type="project" value="UniProtKB"/>
</dbReference>
<dbReference type="GO" id="GO:0050885">
    <property type="term" value="P:neuromuscular process controlling balance"/>
    <property type="evidence" value="ECO:0000315"/>
    <property type="project" value="MGI"/>
</dbReference>
<dbReference type="GO" id="GO:0008104">
    <property type="term" value="P:protein localization"/>
    <property type="evidence" value="ECO:0000315"/>
    <property type="project" value="UniProtKB"/>
</dbReference>
<dbReference type="GO" id="GO:0002021">
    <property type="term" value="P:response to dietary excess"/>
    <property type="evidence" value="ECO:0000315"/>
    <property type="project" value="MGI"/>
</dbReference>
<dbReference type="GO" id="GO:0007605">
    <property type="term" value="P:sensory perception of sound"/>
    <property type="evidence" value="ECO:0000315"/>
    <property type="project" value="MGI"/>
</dbReference>
<dbReference type="GO" id="GO:0007601">
    <property type="term" value="P:visual perception"/>
    <property type="evidence" value="ECO:0007669"/>
    <property type="project" value="UniProtKB-KW"/>
</dbReference>
<dbReference type="CDD" id="cd10297">
    <property type="entry name" value="GST_C_CLIC5"/>
    <property type="match status" value="1"/>
</dbReference>
<dbReference type="CDD" id="cd03061">
    <property type="entry name" value="GST_N_CLIC"/>
    <property type="match status" value="1"/>
</dbReference>
<dbReference type="FunFam" id="1.20.1050.10:FF:000001">
    <property type="entry name" value="Chloride intracellular channel 2"/>
    <property type="match status" value="1"/>
</dbReference>
<dbReference type="FunFam" id="3.40.30.10:FF:000021">
    <property type="entry name" value="Chloride intracellular channel 4"/>
    <property type="match status" value="1"/>
</dbReference>
<dbReference type="Gene3D" id="1.20.1050.10">
    <property type="match status" value="1"/>
</dbReference>
<dbReference type="Gene3D" id="3.40.30.10">
    <property type="entry name" value="Glutaredoxin"/>
    <property type="match status" value="1"/>
</dbReference>
<dbReference type="InterPro" id="IPR002946">
    <property type="entry name" value="CLIC"/>
</dbReference>
<dbReference type="InterPro" id="IPR042069">
    <property type="entry name" value="CLIC5_C_GST"/>
</dbReference>
<dbReference type="InterPro" id="IPR053823">
    <property type="entry name" value="CLIC_N"/>
</dbReference>
<dbReference type="InterPro" id="IPR010987">
    <property type="entry name" value="Glutathione-S-Trfase_C-like"/>
</dbReference>
<dbReference type="InterPro" id="IPR036282">
    <property type="entry name" value="Glutathione-S-Trfase_C_sf"/>
</dbReference>
<dbReference type="InterPro" id="IPR040079">
    <property type="entry name" value="Glutathione_S-Trfase"/>
</dbReference>
<dbReference type="InterPro" id="IPR036249">
    <property type="entry name" value="Thioredoxin-like_sf"/>
</dbReference>
<dbReference type="NCBIfam" id="TIGR00862">
    <property type="entry name" value="O-ClC"/>
    <property type="match status" value="1"/>
</dbReference>
<dbReference type="PANTHER" id="PTHR45476:SF4">
    <property type="entry name" value="CHLORIDE INTRACELLULAR CHANNEL PROTEIN 5"/>
    <property type="match status" value="1"/>
</dbReference>
<dbReference type="PANTHER" id="PTHR45476">
    <property type="entry name" value="CHLORIDE INTRACELLULAR CHANNEL PROTEIN 6-RELATED"/>
    <property type="match status" value="1"/>
</dbReference>
<dbReference type="Pfam" id="PF22441">
    <property type="entry name" value="CLIC-like_N"/>
    <property type="match status" value="1"/>
</dbReference>
<dbReference type="Pfam" id="PF13410">
    <property type="entry name" value="GST_C_2"/>
    <property type="match status" value="1"/>
</dbReference>
<dbReference type="PRINTS" id="PR01263">
    <property type="entry name" value="INTCLCHANNEL"/>
</dbReference>
<dbReference type="SFLD" id="SFLDS00019">
    <property type="entry name" value="Glutathione_Transferase_(cytos"/>
    <property type="match status" value="1"/>
</dbReference>
<dbReference type="SFLD" id="SFLDG00358">
    <property type="entry name" value="Main_(cytGST)"/>
    <property type="match status" value="1"/>
</dbReference>
<dbReference type="SUPFAM" id="SSF47616">
    <property type="entry name" value="GST C-terminal domain-like"/>
    <property type="match status" value="1"/>
</dbReference>
<dbReference type="SUPFAM" id="SSF52833">
    <property type="entry name" value="Thioredoxin-like"/>
    <property type="match status" value="1"/>
</dbReference>
<dbReference type="PROSITE" id="PS50405">
    <property type="entry name" value="GST_CTER"/>
    <property type="match status" value="1"/>
</dbReference>
<evidence type="ECO:0000250" key="1"/>
<evidence type="ECO:0000250" key="2">
    <source>
        <dbReference type="UniProtKB" id="O00299"/>
    </source>
</evidence>
<evidence type="ECO:0000250" key="3">
    <source>
        <dbReference type="UniProtKB" id="Q9EPT8"/>
    </source>
</evidence>
<evidence type="ECO:0000250" key="4">
    <source>
        <dbReference type="UniProtKB" id="Q9NZA1"/>
    </source>
</evidence>
<evidence type="ECO:0000255" key="5"/>
<evidence type="ECO:0000255" key="6">
    <source>
        <dbReference type="PROSITE-ProRule" id="PRU00685"/>
    </source>
</evidence>
<evidence type="ECO:0000269" key="7">
    <source>
    </source>
</evidence>
<evidence type="ECO:0000269" key="8">
    <source>
    </source>
</evidence>
<evidence type="ECO:0000269" key="9">
    <source>
    </source>
</evidence>
<evidence type="ECO:0000269" key="10">
    <source>
    </source>
</evidence>
<evidence type="ECO:0000305" key="11"/>
<feature type="chain" id="PRO_0000144215" description="Chloride intracellular channel protein 5">
    <location>
        <begin position="1"/>
        <end position="251"/>
    </location>
</feature>
<feature type="transmembrane region" description="Helical; Note=After insertion into the membrane" evidence="5">
    <location>
        <begin position="34"/>
        <end position="54"/>
    </location>
</feature>
<feature type="domain" description="GST C-terminal" evidence="6">
    <location>
        <begin position="101"/>
        <end position="241"/>
    </location>
</feature>
<feature type="region of interest" description="Required for insertion into the membrane" evidence="1">
    <location>
        <begin position="1"/>
        <end position="98"/>
    </location>
</feature>
<feature type="short sequence motif" description="G-site" evidence="2">
    <location>
        <begin position="32"/>
        <end position="35"/>
    </location>
</feature>
<gene>
    <name type="primary">Clic5</name>
</gene>
<name>CLIC5_MOUSE</name>
<comment type="function">
    <text evidence="2 4 7 8 9">In the soluble state, catalyzes glutaredoxin-like thiol disulfide exchange reactions with reduced glutathione as electron donor (By similarity). Can insert into membranes and form non-selective ion channels almost equally permeable to Na(+), K(+) and Cl(-) (By similarity). Required for normal hearing (By similarity). Necessary for the formation of stereocilia in the inner ear and normal development of the organ of Corti (PubMed:17021174, PubMed:24285636). Required for the proper localization of PTPRQ and RDX to the stereocilium base during postnatal maturation of hair bundles (PubMed:24285636). Can insert into membranes and form poorly selective ion channels that may also transport chloride ions (By similarity). Required for the development and/or maintenance of the proper glomerular endothelial cell and podocyte architecture (By similarity). Plays a role in formation of the lens suture in the eye, which is important for normal optical properties of the lens (PubMed:29425878).</text>
</comment>
<comment type="catalytic activity">
    <reaction evidence="4">
        <text>Na(+)(in) = Na(+)(out)</text>
        <dbReference type="Rhea" id="RHEA:34963"/>
        <dbReference type="ChEBI" id="CHEBI:29101"/>
    </reaction>
</comment>
<comment type="catalytic activity">
    <reaction evidence="4">
        <text>K(+)(in) = K(+)(out)</text>
        <dbReference type="Rhea" id="RHEA:29463"/>
        <dbReference type="ChEBI" id="CHEBI:29103"/>
    </reaction>
</comment>
<comment type="catalytic activity">
    <reaction evidence="4">
        <text>chloride(in) = chloride(out)</text>
        <dbReference type="Rhea" id="RHEA:29823"/>
        <dbReference type="ChEBI" id="CHEBI:17996"/>
    </reaction>
</comment>
<comment type="activity regulation">
    <text evidence="4">Inhibited by F-actin.</text>
</comment>
<comment type="subunit">
    <text evidence="4 8 10">Component of a multimeric complex consisting of several cytoskeletal proteins, including actin, ezrin, alpha-actinin, gelsolin, and IQGAP1 (By similarity). Interacts with AKAP9 (By similarity). Interacts with TPRN (PubMed:37952086). TPRN, CLIC5 and PTPQR form concentric rings at the base of stereocilia and may form a complex (PubMed:37952086). Interacts with EZR, MYO6 and RDX; the proteins may work together as a complex to stabilize linkages between the plasma membrane and subjacent actin cytoskeleton at the stereocilium base (PubMed:24285636).</text>
</comment>
<comment type="subcellular location">
    <subcellularLocation>
        <location evidence="4">Golgi apparatus</location>
    </subcellularLocation>
    <subcellularLocation>
        <location evidence="9">Cytoplasm</location>
        <location evidence="9">Cytoskeleton</location>
        <location evidence="9">Microtubule organizing center</location>
        <location evidence="9">Centrosome</location>
    </subcellularLocation>
    <subcellularLocation>
        <location evidence="4">Cytoplasm</location>
        <location evidence="4">Cytoskeleton</location>
    </subcellularLocation>
    <subcellularLocation>
        <location evidence="4">Cytoplasm</location>
        <location evidence="4">Cell cortex</location>
    </subcellularLocation>
    <subcellularLocation>
        <location evidence="4">Membrane</location>
        <topology evidence="5">Single-pass membrane protein</topology>
    </subcellularLocation>
    <subcellularLocation>
        <location evidence="7">Apical cell membrane</location>
        <topology evidence="5">Single-pass membrane protein</topology>
    </subcellularLocation>
    <subcellularLocation>
        <location evidence="2">Cytoplasm</location>
    </subcellularLocation>
    <subcellularLocation>
        <location evidence="3">Mitochondrion</location>
    </subcellularLocation>
    <subcellularLocation>
        <location evidence="7 8 10">Cell projection</location>
        <location evidence="7 8 10">Stereocilium</location>
    </subcellularLocation>
    <text evidence="2 4 7 9">Colocalized with AKAP9 at the Golgi apparatus as well as, to a lesser extent, the centrosome (By similarity). Associates with the cortical actin cytoskeleton (By similarity). Localizes to the apical region of cochlear hair cells, at the base of the actin-rich hair bundle (PubMed:17021174). Colocalizes with podocalyxin at the apical cell membrane in renal glomeruli (By similarity). May localize to the centrosome in lens epithelial cells (PubMed:29425878). Exists both as soluble cytoplasmic protein and as membrane protein with probably a single transmembrane domain (By similarity).</text>
</comment>
<comment type="tissue specificity">
    <text evidence="7 8 9">Detected in lung and inner ear. Detected in embryonic cochlea, on microvilli-covered apical surfaces of interdental cells, columnar cells of Kolliker's organ, and on stereocilia of inner and outer hair cells (at protein level) (PubMed:17021174). Also detected in the eye, where it localizes to lens fiber cells in the lens epithelium (at protein level) (PubMed:29425878).</text>
</comment>
<comment type="domain">
    <text evidence="2">The active G-site contains a monothiol Cys-X-X-Ser motif which mediates glutathione-dependent redox catalysis.</text>
</comment>
<comment type="domain">
    <text evidence="2">Members of this family may change from a globular, soluble state to a state where the N-terminal domain is inserted into the membrane and functions as a chloride channel. The redox status of the active cysteine in Cys-X-X-Cys/Ser motif likely determines the capacity to adopt a soluble or membrane-inserted state. A conformation change of the N-terminal domain is thought to expose hydrophobic surfaces that trigger membrane insertion (By similarity).</text>
</comment>
<comment type="disease">
    <text evidence="7 8 9">Defects in Clic5 are a cause of the jitterbug (jbg) phenotype (PubMed:17021174, PubMed:24285636). Jbg is the result of a spontaneous mutation that leads to severe degeneration of the organ of Corti in the inner ear (PubMed:17021174). Jbg leads to progressive degeneration of inner ear hair cells (PubMed:17021174, PubMed:24285636). Affected mice are identified by head bobbing, circling behavior and their inability to swim (PubMed:17021174). They cannot hear well when young, and become completely deaf after 5 months (PubMed:17021174). In addition, there are eye defects with aberrant development of the lens suture and formation of lens opacities (PubMed:29425878).</text>
</comment>
<comment type="similarity">
    <text evidence="11">Belongs to the chloride channel CLIC family.</text>
</comment>
<proteinExistence type="evidence at protein level"/>
<accession>Q8BXK9</accession>
<accession>Q3U0H8</accession>